<dbReference type="EMBL" id="AL157959">
    <property type="protein sequence ID" value="CAM07508.1"/>
    <property type="molecule type" value="Genomic_DNA"/>
</dbReference>
<dbReference type="PIR" id="E82013">
    <property type="entry name" value="E82013"/>
</dbReference>
<dbReference type="RefSeq" id="WP_002239407.1">
    <property type="nucleotide sequence ID" value="NC_003116.1"/>
</dbReference>
<dbReference type="SMR" id="P57072"/>
<dbReference type="EnsemblBacteria" id="CAM07508">
    <property type="protein sequence ID" value="CAM07508"/>
    <property type="gene ID" value="NMA0194"/>
</dbReference>
<dbReference type="KEGG" id="nma:NMA0194"/>
<dbReference type="HOGENOM" id="CLU_009833_0_2_4"/>
<dbReference type="Proteomes" id="UP000000626">
    <property type="component" value="Chromosome"/>
</dbReference>
<dbReference type="GO" id="GO:0005829">
    <property type="term" value="C:cytosol"/>
    <property type="evidence" value="ECO:0007669"/>
    <property type="project" value="TreeGrafter"/>
</dbReference>
<dbReference type="GO" id="GO:0003729">
    <property type="term" value="F:mRNA binding"/>
    <property type="evidence" value="ECO:0007669"/>
    <property type="project" value="TreeGrafter"/>
</dbReference>
<dbReference type="GO" id="GO:0003735">
    <property type="term" value="F:structural constituent of ribosome"/>
    <property type="evidence" value="ECO:0007669"/>
    <property type="project" value="TreeGrafter"/>
</dbReference>
<dbReference type="GO" id="GO:0006139">
    <property type="term" value="P:nucleobase-containing compound metabolic process"/>
    <property type="evidence" value="ECO:0007669"/>
    <property type="project" value="InterPro"/>
</dbReference>
<dbReference type="GO" id="GO:0006412">
    <property type="term" value="P:translation"/>
    <property type="evidence" value="ECO:0007669"/>
    <property type="project" value="TreeGrafter"/>
</dbReference>
<dbReference type="CDD" id="cd05685">
    <property type="entry name" value="S1_Tex"/>
    <property type="match status" value="1"/>
</dbReference>
<dbReference type="FunFam" id="1.10.150.310:FF:000001">
    <property type="entry name" value="RNA-binding transcriptional accessory protein"/>
    <property type="match status" value="1"/>
</dbReference>
<dbReference type="FunFam" id="2.40.50.140:FF:000051">
    <property type="entry name" value="RNA-binding transcriptional accessory protein"/>
    <property type="match status" value="1"/>
</dbReference>
<dbReference type="FunFam" id="3.30.420.140:FF:000001">
    <property type="entry name" value="RNA-binding transcriptional accessory protein"/>
    <property type="match status" value="1"/>
</dbReference>
<dbReference type="FunFam" id="1.10.10.650:FF:000001">
    <property type="entry name" value="S1 RNA-binding domain 1"/>
    <property type="match status" value="1"/>
</dbReference>
<dbReference type="Gene3D" id="2.40.50.140">
    <property type="entry name" value="Nucleic acid-binding proteins"/>
    <property type="match status" value="1"/>
</dbReference>
<dbReference type="Gene3D" id="1.10.10.650">
    <property type="entry name" value="RuvA domain 2-like"/>
    <property type="match status" value="1"/>
</dbReference>
<dbReference type="Gene3D" id="1.10.3500.10">
    <property type="entry name" value="Tex N-terminal region-like"/>
    <property type="match status" value="1"/>
</dbReference>
<dbReference type="Gene3D" id="1.10.150.310">
    <property type="entry name" value="Tex RuvX-like domain-like"/>
    <property type="match status" value="1"/>
</dbReference>
<dbReference type="Gene3D" id="3.30.420.140">
    <property type="entry name" value="YqgF/RNase H-like domain"/>
    <property type="match status" value="1"/>
</dbReference>
<dbReference type="InterPro" id="IPR041692">
    <property type="entry name" value="HHH_9"/>
</dbReference>
<dbReference type="InterPro" id="IPR012340">
    <property type="entry name" value="NA-bd_OB-fold"/>
</dbReference>
<dbReference type="InterPro" id="IPR050437">
    <property type="entry name" value="Ribos_protein_bS1-like"/>
</dbReference>
<dbReference type="InterPro" id="IPR012337">
    <property type="entry name" value="RNaseH-like_sf"/>
</dbReference>
<dbReference type="InterPro" id="IPR010994">
    <property type="entry name" value="RuvA_2-like"/>
</dbReference>
<dbReference type="InterPro" id="IPR003029">
    <property type="entry name" value="S1_domain"/>
</dbReference>
<dbReference type="InterPro" id="IPR044146">
    <property type="entry name" value="S1_Tex"/>
</dbReference>
<dbReference type="InterPro" id="IPR055179">
    <property type="entry name" value="Tex-like_central_region"/>
</dbReference>
<dbReference type="InterPro" id="IPR023323">
    <property type="entry name" value="Tex-like_dom_sf"/>
</dbReference>
<dbReference type="InterPro" id="IPR023319">
    <property type="entry name" value="Tex-like_HTH_dom_sf"/>
</dbReference>
<dbReference type="InterPro" id="IPR018974">
    <property type="entry name" value="Tex-like_N"/>
</dbReference>
<dbReference type="InterPro" id="IPR032639">
    <property type="entry name" value="Tex_YqgF"/>
</dbReference>
<dbReference type="InterPro" id="IPR006641">
    <property type="entry name" value="YqgF/RNaseH-like_dom"/>
</dbReference>
<dbReference type="InterPro" id="IPR037027">
    <property type="entry name" value="YqgF/RNaseH-like_dom_sf"/>
</dbReference>
<dbReference type="PANTHER" id="PTHR10724">
    <property type="entry name" value="30S RIBOSOMAL PROTEIN S1"/>
    <property type="match status" value="1"/>
</dbReference>
<dbReference type="PANTHER" id="PTHR10724:SF10">
    <property type="entry name" value="S1 RNA-BINDING DOMAIN-CONTAINING PROTEIN 1"/>
    <property type="match status" value="1"/>
</dbReference>
<dbReference type="Pfam" id="PF12836">
    <property type="entry name" value="HHH_3"/>
    <property type="match status" value="1"/>
</dbReference>
<dbReference type="Pfam" id="PF17674">
    <property type="entry name" value="HHH_9"/>
    <property type="match status" value="1"/>
</dbReference>
<dbReference type="Pfam" id="PF00575">
    <property type="entry name" value="S1"/>
    <property type="match status" value="1"/>
</dbReference>
<dbReference type="Pfam" id="PF22706">
    <property type="entry name" value="Tex_central_region"/>
    <property type="match status" value="1"/>
</dbReference>
<dbReference type="Pfam" id="PF09371">
    <property type="entry name" value="Tex_N"/>
    <property type="match status" value="1"/>
</dbReference>
<dbReference type="Pfam" id="PF16921">
    <property type="entry name" value="Tex_YqgF"/>
    <property type="match status" value="1"/>
</dbReference>
<dbReference type="SMART" id="SM00316">
    <property type="entry name" value="S1"/>
    <property type="match status" value="1"/>
</dbReference>
<dbReference type="SMART" id="SM00732">
    <property type="entry name" value="YqgFc"/>
    <property type="match status" value="1"/>
</dbReference>
<dbReference type="SUPFAM" id="SSF50249">
    <property type="entry name" value="Nucleic acid-binding proteins"/>
    <property type="match status" value="1"/>
</dbReference>
<dbReference type="SUPFAM" id="SSF53098">
    <property type="entry name" value="Ribonuclease H-like"/>
    <property type="match status" value="1"/>
</dbReference>
<dbReference type="SUPFAM" id="SSF47781">
    <property type="entry name" value="RuvA domain 2-like"/>
    <property type="match status" value="2"/>
</dbReference>
<dbReference type="SUPFAM" id="SSF158832">
    <property type="entry name" value="Tex N-terminal region-like"/>
    <property type="match status" value="1"/>
</dbReference>
<dbReference type="PROSITE" id="PS50126">
    <property type="entry name" value="S1"/>
    <property type="match status" value="1"/>
</dbReference>
<evidence type="ECO:0000255" key="1">
    <source>
        <dbReference type="PROSITE-ProRule" id="PRU00180"/>
    </source>
</evidence>
<evidence type="ECO:0000256" key="2">
    <source>
        <dbReference type="SAM" id="MobiDB-lite"/>
    </source>
</evidence>
<evidence type="ECO:0000305" key="3"/>
<accession>P57072</accession>
<accession>A1IP49</accession>
<protein>
    <recommendedName>
        <fullName>Uncharacterized protein NMA0194</fullName>
    </recommendedName>
</protein>
<keyword id="KW-0694">RNA-binding</keyword>
<organism>
    <name type="scientific">Neisseria meningitidis serogroup A / serotype 4A (strain DSM 15465 / Z2491)</name>
    <dbReference type="NCBI Taxonomy" id="122587"/>
    <lineage>
        <taxon>Bacteria</taxon>
        <taxon>Pseudomonadati</taxon>
        <taxon>Pseudomonadota</taxon>
        <taxon>Betaproteobacteria</taxon>
        <taxon>Neisseriales</taxon>
        <taxon>Neisseriaceae</taxon>
        <taxon>Neisseria</taxon>
    </lineage>
</organism>
<reference key="1">
    <citation type="journal article" date="2000" name="Nature">
        <title>Complete DNA sequence of a serogroup A strain of Neisseria meningitidis Z2491.</title>
        <authorList>
            <person name="Parkhill J."/>
            <person name="Achtman M."/>
            <person name="James K.D."/>
            <person name="Bentley S.D."/>
            <person name="Churcher C.M."/>
            <person name="Klee S.R."/>
            <person name="Morelli G."/>
            <person name="Basham D."/>
            <person name="Brown D."/>
            <person name="Chillingworth T."/>
            <person name="Davies R.M."/>
            <person name="Davis P."/>
            <person name="Devlin K."/>
            <person name="Feltwell T."/>
            <person name="Hamlin N."/>
            <person name="Holroyd S."/>
            <person name="Jagels K."/>
            <person name="Leather S."/>
            <person name="Moule S."/>
            <person name="Mungall K.L."/>
            <person name="Quail M.A."/>
            <person name="Rajandream M.A."/>
            <person name="Rutherford K.M."/>
            <person name="Simmonds M."/>
            <person name="Skelton J."/>
            <person name="Whitehead S."/>
            <person name="Spratt B.G."/>
            <person name="Barrell B.G."/>
        </authorList>
    </citation>
    <scope>NUCLEOTIDE SEQUENCE [LARGE SCALE GENOMIC DNA]</scope>
    <source>
        <strain>DSM 15465 / Z2491</strain>
    </source>
</reference>
<proteinExistence type="predicted"/>
<gene>
    <name type="ordered locus">NMA0194</name>
</gene>
<sequence length="757" mass="83162">MNITQILSQELSATAAQITAAVELLDDGATVPFIARYRKEATGGLDDTQLRRLAERLQYLRELEERKAVVLKSIEEQGKLSDDLRAQIEAADNKTALEDLYLPYKPKRRTKAQIAREHGLQPLADVLLAEQSQDVEAAAQGYLNENVPDAKAALDGARAILMEQFAEDAELIGTLRDKLWNEAEIHAQVVGGKETEGEKFSDYFDHREPIRAMPSHRALAVLRGRNEGVLNIALKYQPDDTPITQQSEYEQIIARRFKVSDGHKWLRDTVRLTWRAKIFLSLELEALNRLKEAADTDAITVFARNLKDLLLAAPAGRLTTLGLDPGYRNGVKCAVVDDTGKLLDTVIVYLHQENNMLATLSRLIKQHGVKLIAIGNGTASRETDKIAGELVREMSKMGLHKIVVSEAGASIYSASELAAREFPDLDVSLRGAVSIARRLQDPLAELVKIDPKSIGVGQYQHDVNQSQLAKSLDAVVEDCVNAVGVDVNTASAPLLARISGLNQTLAQNIVAYRDENGAFDSRKKLLKVPRLGEKTFEQAAGFLRINGGKEPLDASAVHPEAYPVVAKMLAQQGISAAELIGNRERVKQIKASDFTDERFGLPTILDILSELEKPGRDPRGEFQTASFAEGIHEISDLQVGMILEGVVSNVANFGAFVDIGVHQDGLVHISALSNKFVQDPREVVKAGDVVKVKVLEVDAARKRIALTMRLDDEPGGAKHKMPSENRSRERTAGRKPQRNDRAPANSAMADAFAKLKR</sequence>
<name>YHGF_NEIMA</name>
<feature type="chain" id="PRO_0000215107" description="Uncharacterized protein NMA0194">
    <location>
        <begin position="1"/>
        <end position="757"/>
    </location>
</feature>
<feature type="domain" description="S1 motif" evidence="1">
    <location>
        <begin position="640"/>
        <end position="709"/>
    </location>
</feature>
<feature type="region of interest" description="Disordered" evidence="2">
    <location>
        <begin position="710"/>
        <end position="757"/>
    </location>
</feature>
<feature type="compositionally biased region" description="Basic and acidic residues" evidence="2">
    <location>
        <begin position="710"/>
        <end position="741"/>
    </location>
</feature>
<feature type="sequence conflict" description="In Ref. 1." evidence="3" ref="1">
    <original>WL</original>
    <variation>CV</variation>
    <location>
        <begin position="265"/>
        <end position="266"/>
    </location>
</feature>